<organism>
    <name type="scientific">Mus musculus</name>
    <name type="common">Mouse</name>
    <dbReference type="NCBI Taxonomy" id="10090"/>
    <lineage>
        <taxon>Eukaryota</taxon>
        <taxon>Metazoa</taxon>
        <taxon>Chordata</taxon>
        <taxon>Craniata</taxon>
        <taxon>Vertebrata</taxon>
        <taxon>Euteleostomi</taxon>
        <taxon>Mammalia</taxon>
        <taxon>Eutheria</taxon>
        <taxon>Euarchontoglires</taxon>
        <taxon>Glires</taxon>
        <taxon>Rodentia</taxon>
        <taxon>Myomorpha</taxon>
        <taxon>Muroidea</taxon>
        <taxon>Muridae</taxon>
        <taxon>Murinae</taxon>
        <taxon>Mus</taxon>
        <taxon>Mus</taxon>
    </lineage>
</organism>
<evidence type="ECO:0000250" key="1">
    <source>
        <dbReference type="UniProtKB" id="Q5TH69"/>
    </source>
</evidence>
<evidence type="ECO:0000255" key="2"/>
<evidence type="ECO:0000256" key="3">
    <source>
        <dbReference type="SAM" id="MobiDB-lite"/>
    </source>
</evidence>
<evidence type="ECO:0000269" key="4">
    <source>
    </source>
</evidence>
<evidence type="ECO:0000269" key="5">
    <source>
    </source>
</evidence>
<evidence type="ECO:0000305" key="6"/>
<evidence type="ECO:0000305" key="7">
    <source>
    </source>
</evidence>
<evidence type="ECO:0000312" key="8">
    <source>
        <dbReference type="MGI" id="MGI:106387"/>
    </source>
</evidence>
<evidence type="ECO:0007744" key="9">
    <source>
    </source>
</evidence>
<comment type="function">
    <text evidence="1 4 5">Participates in the regulation of systemic glucose homeostasis, where it negatively regulates insulin granule biogenesis in pancreatic islet beta cells (PubMed:24711543). Also regulates glucagon granule production in pancreatic alpha cells (PubMed:25737957). Inhibits nuclear translocation of the transcriptional coregulator PHB2 and may enhance estrogen receptor alpha (ESR1) transcriptional activity in breast cancer cells (By similarity).</text>
</comment>
<comment type="subunit">
    <text evidence="1">Interacts with PHB2 (By similarity).</text>
</comment>
<comment type="subcellular location">
    <subcellularLocation>
        <location evidence="4">Cytoplasmic vesicle</location>
        <location evidence="4">Secretory vesicle</location>
    </subcellularLocation>
    <subcellularLocation>
        <location evidence="7">Cytoplasmic vesicle</location>
        <location evidence="7">Secretory vesicle membrane</location>
        <topology evidence="6">Single-pass membrane protein</topology>
    </subcellularLocation>
</comment>
<comment type="tissue specificity">
    <text evidence="4 5">Expressed in pancreatic islet (insulin granules of islet alpha and beta cells) and brain (at protein level).</text>
</comment>
<comment type="disruption phenotype">
    <text evidence="4">Viable and fertile with normal body weight gain. Mice exhibit postprandial hyperinsulinemia and hyperglycemia, and impaired glucose tolerance. Three month old animals show severe insulin resistance in liver and muscle tissue, probably due to chronic insulin exposure.</text>
</comment>
<dbReference type="EMBL" id="AK147679">
    <property type="protein sequence ID" value="BAE28069.1"/>
    <property type="molecule type" value="mRNA"/>
</dbReference>
<dbReference type="EMBL" id="AK122475">
    <property type="protein sequence ID" value="BAC65757.1"/>
    <property type="molecule type" value="mRNA"/>
</dbReference>
<dbReference type="CCDS" id="CCDS23712.1"/>
<dbReference type="RefSeq" id="NP_001028430.1">
    <property type="nucleotide sequence ID" value="NM_001033258.4"/>
</dbReference>
<dbReference type="SMR" id="Q3UGY8"/>
<dbReference type="BioGRID" id="229664">
    <property type="interactions" value="6"/>
</dbReference>
<dbReference type="FunCoup" id="Q3UGY8">
    <property type="interactions" value="716"/>
</dbReference>
<dbReference type="IntAct" id="Q3UGY8">
    <property type="interactions" value="1"/>
</dbReference>
<dbReference type="STRING" id="10090.ENSMUSP00000149210"/>
<dbReference type="GlyGen" id="Q3UGY8">
    <property type="glycosylation" value="3 sites, 1 N-linked glycan (1 site), 1 O-linked glycan (1 site)"/>
</dbReference>
<dbReference type="iPTMnet" id="Q3UGY8"/>
<dbReference type="PhosphoSitePlus" id="Q3UGY8"/>
<dbReference type="SwissPalm" id="Q3UGY8"/>
<dbReference type="PaxDb" id="10090-ENSMUSP00000019999"/>
<dbReference type="PeptideAtlas" id="Q3UGY8"/>
<dbReference type="ProteomicsDB" id="273690"/>
<dbReference type="Antibodypedia" id="52580">
    <property type="antibodies" value="8 antibodies from 6 providers"/>
</dbReference>
<dbReference type="Ensembl" id="ENSMUST00000215836.2">
    <property type="protein sequence ID" value="ENSMUSP00000149210.2"/>
    <property type="gene ID" value="ENSMUSG00000019852.8"/>
</dbReference>
<dbReference type="GeneID" id="215821"/>
<dbReference type="KEGG" id="mmu:215821"/>
<dbReference type="UCSC" id="uc007emn.1">
    <property type="organism name" value="mouse"/>
</dbReference>
<dbReference type="AGR" id="MGI:106387"/>
<dbReference type="CTD" id="57221"/>
<dbReference type="MGI" id="MGI:106387">
    <property type="gene designation" value="Arfgef3"/>
</dbReference>
<dbReference type="VEuPathDB" id="HostDB:ENSMUSG00000019852"/>
<dbReference type="eggNOG" id="KOG1846">
    <property type="taxonomic scope" value="Eukaryota"/>
</dbReference>
<dbReference type="GeneTree" id="ENSGT00530000064150"/>
<dbReference type="HOGENOM" id="CLU_000867_1_0_1"/>
<dbReference type="InParanoid" id="Q3UGY8"/>
<dbReference type="OMA" id="CRNNPFD"/>
<dbReference type="OrthoDB" id="10002886at2759"/>
<dbReference type="PhylomeDB" id="Q3UGY8"/>
<dbReference type="TreeFam" id="TF300714"/>
<dbReference type="BioGRID-ORCS" id="215821">
    <property type="hits" value="2 hits in 75 CRISPR screens"/>
</dbReference>
<dbReference type="ChiTaRS" id="Arfgef3">
    <property type="organism name" value="mouse"/>
</dbReference>
<dbReference type="PRO" id="PR:Q3UGY8"/>
<dbReference type="Proteomes" id="UP000000589">
    <property type="component" value="Chromosome 10"/>
</dbReference>
<dbReference type="RNAct" id="Q3UGY8">
    <property type="molecule type" value="protein"/>
</dbReference>
<dbReference type="Bgee" id="ENSMUSG00000019852">
    <property type="expression patterns" value="Expressed in superior cervical ganglion and 182 other cell types or tissues"/>
</dbReference>
<dbReference type="ExpressionAtlas" id="Q3UGY8">
    <property type="expression patterns" value="baseline and differential"/>
</dbReference>
<dbReference type="GO" id="GO:0030658">
    <property type="term" value="C:transport vesicle membrane"/>
    <property type="evidence" value="ECO:0007669"/>
    <property type="project" value="UniProtKB-SubCell"/>
</dbReference>
<dbReference type="GO" id="GO:0005085">
    <property type="term" value="F:guanyl-nucleotide exchange factor activity"/>
    <property type="evidence" value="ECO:0007669"/>
    <property type="project" value="UniProtKB-KW"/>
</dbReference>
<dbReference type="GO" id="GO:0032012">
    <property type="term" value="P:regulation of ARF protein signal transduction"/>
    <property type="evidence" value="ECO:0007669"/>
    <property type="project" value="InterPro"/>
</dbReference>
<dbReference type="InterPro" id="IPR016024">
    <property type="entry name" value="ARM-type_fold"/>
</dbReference>
<dbReference type="InterPro" id="IPR032629">
    <property type="entry name" value="DCB_dom"/>
</dbReference>
<dbReference type="InterPro" id="IPR015403">
    <property type="entry name" value="Mon2/Sec7/BIG1-like_HDS"/>
</dbReference>
<dbReference type="InterPro" id="IPR046455">
    <property type="entry name" value="Sec7/BIG1-like_C"/>
</dbReference>
<dbReference type="InterPro" id="IPR000904">
    <property type="entry name" value="Sec7_dom"/>
</dbReference>
<dbReference type="PANTHER" id="PTHR10663:SF344">
    <property type="entry name" value="BREFELDIN A-INHIBITED GUANINE NUCLEOTIDE-EXCHANGE PROTEIN 3"/>
    <property type="match status" value="1"/>
</dbReference>
<dbReference type="PANTHER" id="PTHR10663">
    <property type="entry name" value="GUANYL-NUCLEOTIDE EXCHANGE FACTOR"/>
    <property type="match status" value="1"/>
</dbReference>
<dbReference type="Pfam" id="PF20252">
    <property type="entry name" value="BIG2_C"/>
    <property type="match status" value="1"/>
</dbReference>
<dbReference type="Pfam" id="PF16213">
    <property type="entry name" value="DCB"/>
    <property type="match status" value="1"/>
</dbReference>
<dbReference type="Pfam" id="PF09324">
    <property type="entry name" value="Sec7-like_HDS"/>
    <property type="match status" value="1"/>
</dbReference>
<dbReference type="SMART" id="SM00222">
    <property type="entry name" value="Sec7"/>
    <property type="match status" value="1"/>
</dbReference>
<dbReference type="SUPFAM" id="SSF48371">
    <property type="entry name" value="ARM repeat"/>
    <property type="match status" value="1"/>
</dbReference>
<accession>Q3UGY8</accession>
<accession>Q80TH0</accession>
<keyword id="KW-0968">Cytoplasmic vesicle</keyword>
<keyword id="KW-0344">Guanine-nucleotide releasing factor</keyword>
<keyword id="KW-0472">Membrane</keyword>
<keyword id="KW-0597">Phosphoprotein</keyword>
<keyword id="KW-1185">Reference proteome</keyword>
<keyword id="KW-0812">Transmembrane</keyword>
<keyword id="KW-1133">Transmembrane helix</keyword>
<gene>
    <name evidence="8" type="primary">Arfgef3</name>
    <name type="synonym">Big3</name>
    <name type="synonym">D10Bwg1379e</name>
    <name type="synonym">Kiaa1244</name>
</gene>
<proteinExistence type="evidence at protein level"/>
<reference key="1">
    <citation type="journal article" date="2005" name="Science">
        <title>The transcriptional landscape of the mammalian genome.</title>
        <authorList>
            <person name="Carninci P."/>
            <person name="Kasukawa T."/>
            <person name="Katayama S."/>
            <person name="Gough J."/>
            <person name="Frith M.C."/>
            <person name="Maeda N."/>
            <person name="Oyama R."/>
            <person name="Ravasi T."/>
            <person name="Lenhard B."/>
            <person name="Wells C."/>
            <person name="Kodzius R."/>
            <person name="Shimokawa K."/>
            <person name="Bajic V.B."/>
            <person name="Brenner S.E."/>
            <person name="Batalov S."/>
            <person name="Forrest A.R."/>
            <person name="Zavolan M."/>
            <person name="Davis M.J."/>
            <person name="Wilming L.G."/>
            <person name="Aidinis V."/>
            <person name="Allen J.E."/>
            <person name="Ambesi-Impiombato A."/>
            <person name="Apweiler R."/>
            <person name="Aturaliya R.N."/>
            <person name="Bailey T.L."/>
            <person name="Bansal M."/>
            <person name="Baxter L."/>
            <person name="Beisel K.W."/>
            <person name="Bersano T."/>
            <person name="Bono H."/>
            <person name="Chalk A.M."/>
            <person name="Chiu K.P."/>
            <person name="Choudhary V."/>
            <person name="Christoffels A."/>
            <person name="Clutterbuck D.R."/>
            <person name="Crowe M.L."/>
            <person name="Dalla E."/>
            <person name="Dalrymple B.P."/>
            <person name="de Bono B."/>
            <person name="Della Gatta G."/>
            <person name="di Bernardo D."/>
            <person name="Down T."/>
            <person name="Engstrom P."/>
            <person name="Fagiolini M."/>
            <person name="Faulkner G."/>
            <person name="Fletcher C.F."/>
            <person name="Fukushima T."/>
            <person name="Furuno M."/>
            <person name="Futaki S."/>
            <person name="Gariboldi M."/>
            <person name="Georgii-Hemming P."/>
            <person name="Gingeras T.R."/>
            <person name="Gojobori T."/>
            <person name="Green R.E."/>
            <person name="Gustincich S."/>
            <person name="Harbers M."/>
            <person name="Hayashi Y."/>
            <person name="Hensch T.K."/>
            <person name="Hirokawa N."/>
            <person name="Hill D."/>
            <person name="Huminiecki L."/>
            <person name="Iacono M."/>
            <person name="Ikeo K."/>
            <person name="Iwama A."/>
            <person name="Ishikawa T."/>
            <person name="Jakt M."/>
            <person name="Kanapin A."/>
            <person name="Katoh M."/>
            <person name="Kawasawa Y."/>
            <person name="Kelso J."/>
            <person name="Kitamura H."/>
            <person name="Kitano H."/>
            <person name="Kollias G."/>
            <person name="Krishnan S.P."/>
            <person name="Kruger A."/>
            <person name="Kummerfeld S.K."/>
            <person name="Kurochkin I.V."/>
            <person name="Lareau L.F."/>
            <person name="Lazarevic D."/>
            <person name="Lipovich L."/>
            <person name="Liu J."/>
            <person name="Liuni S."/>
            <person name="McWilliam S."/>
            <person name="Madan Babu M."/>
            <person name="Madera M."/>
            <person name="Marchionni L."/>
            <person name="Matsuda H."/>
            <person name="Matsuzawa S."/>
            <person name="Miki H."/>
            <person name="Mignone F."/>
            <person name="Miyake S."/>
            <person name="Morris K."/>
            <person name="Mottagui-Tabar S."/>
            <person name="Mulder N."/>
            <person name="Nakano N."/>
            <person name="Nakauchi H."/>
            <person name="Ng P."/>
            <person name="Nilsson R."/>
            <person name="Nishiguchi S."/>
            <person name="Nishikawa S."/>
            <person name="Nori F."/>
            <person name="Ohara O."/>
            <person name="Okazaki Y."/>
            <person name="Orlando V."/>
            <person name="Pang K.C."/>
            <person name="Pavan W.J."/>
            <person name="Pavesi G."/>
            <person name="Pesole G."/>
            <person name="Petrovsky N."/>
            <person name="Piazza S."/>
            <person name="Reed J."/>
            <person name="Reid J.F."/>
            <person name="Ring B.Z."/>
            <person name="Ringwald M."/>
            <person name="Rost B."/>
            <person name="Ruan Y."/>
            <person name="Salzberg S.L."/>
            <person name="Sandelin A."/>
            <person name="Schneider C."/>
            <person name="Schoenbach C."/>
            <person name="Sekiguchi K."/>
            <person name="Semple C.A."/>
            <person name="Seno S."/>
            <person name="Sessa L."/>
            <person name="Sheng Y."/>
            <person name="Shibata Y."/>
            <person name="Shimada H."/>
            <person name="Shimada K."/>
            <person name="Silva D."/>
            <person name="Sinclair B."/>
            <person name="Sperling S."/>
            <person name="Stupka E."/>
            <person name="Sugiura K."/>
            <person name="Sultana R."/>
            <person name="Takenaka Y."/>
            <person name="Taki K."/>
            <person name="Tammoja K."/>
            <person name="Tan S.L."/>
            <person name="Tang S."/>
            <person name="Taylor M.S."/>
            <person name="Tegner J."/>
            <person name="Teichmann S.A."/>
            <person name="Ueda H.R."/>
            <person name="van Nimwegen E."/>
            <person name="Verardo R."/>
            <person name="Wei C.L."/>
            <person name="Yagi K."/>
            <person name="Yamanishi H."/>
            <person name="Zabarovsky E."/>
            <person name="Zhu S."/>
            <person name="Zimmer A."/>
            <person name="Hide W."/>
            <person name="Bult C."/>
            <person name="Grimmond S.M."/>
            <person name="Teasdale R.D."/>
            <person name="Liu E.T."/>
            <person name="Brusic V."/>
            <person name="Quackenbush J."/>
            <person name="Wahlestedt C."/>
            <person name="Mattick J.S."/>
            <person name="Hume D.A."/>
            <person name="Kai C."/>
            <person name="Sasaki D."/>
            <person name="Tomaru Y."/>
            <person name="Fukuda S."/>
            <person name="Kanamori-Katayama M."/>
            <person name="Suzuki M."/>
            <person name="Aoki J."/>
            <person name="Arakawa T."/>
            <person name="Iida J."/>
            <person name="Imamura K."/>
            <person name="Itoh M."/>
            <person name="Kato T."/>
            <person name="Kawaji H."/>
            <person name="Kawagashira N."/>
            <person name="Kawashima T."/>
            <person name="Kojima M."/>
            <person name="Kondo S."/>
            <person name="Konno H."/>
            <person name="Nakano K."/>
            <person name="Ninomiya N."/>
            <person name="Nishio T."/>
            <person name="Okada M."/>
            <person name="Plessy C."/>
            <person name="Shibata K."/>
            <person name="Shiraki T."/>
            <person name="Suzuki S."/>
            <person name="Tagami M."/>
            <person name="Waki K."/>
            <person name="Watahiki A."/>
            <person name="Okamura-Oho Y."/>
            <person name="Suzuki H."/>
            <person name="Kawai J."/>
            <person name="Hayashizaki Y."/>
        </authorList>
    </citation>
    <scope>NUCLEOTIDE SEQUENCE [LARGE SCALE MRNA]</scope>
    <source>
        <strain>C57BL/6J</strain>
    </source>
</reference>
<reference key="2">
    <citation type="journal article" date="2003" name="DNA Res.">
        <title>Prediction of the coding sequences of mouse homologues of KIAA gene: II. The complete nucleotide sequences of 400 mouse KIAA-homologous cDNAs identified by screening of terminal sequences of cDNA clones randomly sampled from size-fractionated libraries.</title>
        <authorList>
            <person name="Okazaki N."/>
            <person name="Kikuno R."/>
            <person name="Ohara R."/>
            <person name="Inamoto S."/>
            <person name="Aizawa H."/>
            <person name="Yuasa S."/>
            <person name="Nakajima D."/>
            <person name="Nagase T."/>
            <person name="Ohara O."/>
            <person name="Koga H."/>
        </authorList>
    </citation>
    <scope>NUCLEOTIDE SEQUENCE [LARGE SCALE MRNA] OF 503-2170</scope>
    <source>
        <tissue>Brain</tissue>
    </source>
</reference>
<reference key="3">
    <citation type="journal article" date="2004" name="Mol. Cell. Proteomics">
        <title>Phosphoproteomic analysis of the developing mouse brain.</title>
        <authorList>
            <person name="Ballif B.A."/>
            <person name="Villen J."/>
            <person name="Beausoleil S.A."/>
            <person name="Schwartz D."/>
            <person name="Gygi S.P."/>
        </authorList>
    </citation>
    <scope>IDENTIFICATION BY MASS SPECTROMETRY [LARGE SCALE ANALYSIS]</scope>
    <source>
        <tissue>Embryonic brain</tissue>
    </source>
</reference>
<reference key="4">
    <citation type="journal article" date="2010" name="Cell">
        <title>A tissue-specific atlas of mouse protein phosphorylation and expression.</title>
        <authorList>
            <person name="Huttlin E.L."/>
            <person name="Jedrychowski M.P."/>
            <person name="Elias J.E."/>
            <person name="Goswami T."/>
            <person name="Rad R."/>
            <person name="Beausoleil S.A."/>
            <person name="Villen J."/>
            <person name="Haas W."/>
            <person name="Sowa M.E."/>
            <person name="Gygi S.P."/>
        </authorList>
    </citation>
    <scope>PHOSPHORYLATION [LARGE SCALE ANALYSIS] AT SER-471; SER-628; SER-632; SER-1045; SER-1881; SER-1975; SER-2072; SER-2074; SER-2088; SER-2094 AND SER-2096</scope>
    <scope>IDENTIFICATION BY MASS SPECTROMETRY [LARGE SCALE ANALYSIS]</scope>
    <source>
        <tissue>Brain</tissue>
        <tissue>Lung</tissue>
        <tissue>Pancreas</tissue>
    </source>
</reference>
<reference key="5">
    <citation type="journal article" date="2014" name="EMBO Rep.">
        <title>BIG3 inhibits insulin granule biogenesis and insulin secretion.</title>
        <authorList>
            <person name="Li H."/>
            <person name="Wei S."/>
            <person name="Cheng K."/>
            <person name="Gounko N.V."/>
            <person name="Ericksen R.E."/>
            <person name="Xu A."/>
            <person name="Hong W."/>
            <person name="Han W."/>
        </authorList>
    </citation>
    <scope>FUNCTION</scope>
    <scope>SUBCELLULAR LOCATION</scope>
    <scope>TISSUE SPECIFICITY</scope>
    <scope>DISRUPTION PHENOTYPE</scope>
</reference>
<reference key="6">
    <citation type="journal article" date="2015" name="Mol. Metab.">
        <title>Increased biogenesis of glucagon-containing secretory granules and glucagon secretion in BIG3-knockout mice.</title>
        <authorList>
            <person name="Li H."/>
            <person name="Liu T."/>
            <person name="Lim J."/>
            <person name="Gounko N.V."/>
            <person name="Hong W."/>
            <person name="Han W."/>
        </authorList>
    </citation>
    <scope>FUNCTION</scope>
    <scope>TISSUE SPECIFICITY</scope>
</reference>
<protein>
    <recommendedName>
        <fullName evidence="6">Brefeldin A-inhibited guanine nucleotide-exchange protein 3</fullName>
    </recommendedName>
    <alternativeName>
        <fullName evidence="8">ARFGEF family member 3</fullName>
    </alternativeName>
</protein>
<name>BIG3_MOUSE</name>
<feature type="chain" id="PRO_0000286672" description="Brefeldin A-inhibited guanine nucleotide-exchange protein 3">
    <location>
        <begin position="1"/>
        <end position="2170"/>
    </location>
</feature>
<feature type="transmembrane region" description="Helical" evidence="2">
    <location>
        <begin position="1488"/>
        <end position="1508"/>
    </location>
</feature>
<feature type="domain" description="SEC7">
    <location>
        <begin position="579"/>
        <end position="792"/>
    </location>
</feature>
<feature type="region of interest" description="Disordered" evidence="3">
    <location>
        <begin position="489"/>
        <end position="547"/>
    </location>
</feature>
<feature type="region of interest" description="Disordered" evidence="3">
    <location>
        <begin position="613"/>
        <end position="634"/>
    </location>
</feature>
<feature type="region of interest" description="Disordered" evidence="3">
    <location>
        <begin position="1843"/>
        <end position="1872"/>
    </location>
</feature>
<feature type="region of interest" description="Disordered" evidence="3">
    <location>
        <begin position="1938"/>
        <end position="1997"/>
    </location>
</feature>
<feature type="region of interest" description="Disordered" evidence="3">
    <location>
        <begin position="2024"/>
        <end position="2058"/>
    </location>
</feature>
<feature type="region of interest" description="Disordered" evidence="3">
    <location>
        <begin position="2078"/>
        <end position="2097"/>
    </location>
</feature>
<feature type="compositionally biased region" description="Polar residues" evidence="3">
    <location>
        <begin position="503"/>
        <end position="524"/>
    </location>
</feature>
<feature type="compositionally biased region" description="Basic and acidic residues" evidence="3">
    <location>
        <begin position="614"/>
        <end position="623"/>
    </location>
</feature>
<feature type="compositionally biased region" description="Polar residues" evidence="3">
    <location>
        <begin position="1938"/>
        <end position="1955"/>
    </location>
</feature>
<feature type="compositionally biased region" description="Basic and acidic residues" evidence="3">
    <location>
        <begin position="1956"/>
        <end position="1966"/>
    </location>
</feature>
<feature type="compositionally biased region" description="Basic and acidic residues" evidence="3">
    <location>
        <begin position="1986"/>
        <end position="1997"/>
    </location>
</feature>
<feature type="compositionally biased region" description="Basic and acidic residues" evidence="3">
    <location>
        <begin position="2036"/>
        <end position="2045"/>
    </location>
</feature>
<feature type="compositionally biased region" description="Low complexity" evidence="3">
    <location>
        <begin position="2088"/>
        <end position="2097"/>
    </location>
</feature>
<feature type="modified residue" description="Phosphoserine" evidence="9">
    <location>
        <position position="471"/>
    </location>
</feature>
<feature type="modified residue" description="Phosphoserine" evidence="9">
    <location>
        <position position="628"/>
    </location>
</feature>
<feature type="modified residue" description="Phosphoserine" evidence="9">
    <location>
        <position position="632"/>
    </location>
</feature>
<feature type="modified residue" description="Phosphoserine" evidence="9">
    <location>
        <position position="1045"/>
    </location>
</feature>
<feature type="modified residue" description="Phosphoserine" evidence="9">
    <location>
        <position position="1881"/>
    </location>
</feature>
<feature type="modified residue" description="Phosphoserine" evidence="9">
    <location>
        <position position="1975"/>
    </location>
</feature>
<feature type="modified residue" description="Phosphoserine" evidence="1">
    <location>
        <position position="1984"/>
    </location>
</feature>
<feature type="modified residue" description="Phosphoserine" evidence="9">
    <location>
        <position position="2072"/>
    </location>
</feature>
<feature type="modified residue" description="Phosphoserine" evidence="9">
    <location>
        <position position="2074"/>
    </location>
</feature>
<feature type="modified residue" description="Phosphoserine" evidence="9">
    <location>
        <position position="2088"/>
    </location>
</feature>
<feature type="modified residue" description="Phosphoserine" evidence="9">
    <location>
        <position position="2094"/>
    </location>
</feature>
<feature type="modified residue" description="Phosphoserine" evidence="9">
    <location>
        <position position="2096"/>
    </location>
</feature>
<sequence>MEEILRKLQRDASGSKYKAIKESCTWALETLGGLDTVVKIPPHLLREKCLLPLQLALESKNVKLAQHALAGMQKLLSEERFVSMETDSDEKQLLNQILNAVKVTPSLNEDLQVEVMKVLLCITYTPTFDMNGSAVLKIAEVCIETYTCSCHQRSINTAVRATLSQMLGDLTLQLRQRQENTIIENPDAPQEFRSQGLTVEALCDDVISVLAVLCEKLQASINDSQQLQLLYLECILSVLSSSSSSMHLHRGFTDLIWKSLCPALVVILGNPIHDKTITSAHSTSTSTSMESDSASLGVSDHGRGSGCSCTAPTLSGPVARTIYYLAAELVRLVGSVDSMKPVLQSLYHRVLLYPPPQHRVEAIKIMKEILGSPQRLYDLAGPSSIESEPRKRSISKRKSHLDLLKLIMDGMTEACIKGGIEACYAAVSCVCTLLGALDELSQGKGLNDTQVQQLLLRLEELRDGAESSRDSMEINEADFRWQRRVLSSEHTPWESGNERSPDISISVTTDTGQTTLEGELGQTTPEDHKNGLKSPAIQEGKGTMGKVSEPEAIDQPDVVQRSHTVPYPDITNFLSVDCRTRSYGSRYSESNFSVDDQDLSRTEFDSCDQYSMAAEKDSGRSDVSDIGSDNCSLADEEQTPRDYIGHRSLRTAALSLKLLKNQEADQHSARLFIQSLEGLLPRLLALSSVEEVDSALQNFASTFCSGMMHSPGFDGGSSLSFQMLMNADSLYTAAHCALLLNLKLSHGDYYRKRPTVAPGMMKEFMKQVQTSGVLMVFSQAWLEELYHQVLDRNMLGEAGYWGSPEDNSLPLITMLTDIDGLESSAIGGQLMASASVESPFTQSRRLDDSTVAGVAFARYILVGCWKNLIDTLSTPLTGRMAGSSKGLAFILGAEGIKEQNQKERDAICMSLDGLRKAARLSCALGVAANCASALAQMAAASCVQEEKEERQSQEPSDALAQVKLKVEQKLEQMGKVQGVWLHTAHVLCMDAILSVGLEMGSHNPDCWPHVFRVCEYVGTLEHTHFSDGISQPPLTIHQPQKTSGSSGLLGEIEFKSSSQEQSLEQGPSLNTAPVVQPHSIQELVRECSRGRTSDFRGGSLSGNSAAKVVLSLSTQADRLFDDATDKLNLTALGGFLYQLKKASQSQLFHSVTDTVDYSLTMPGEVKSTQDQKSALHLFRLGDAMLRIVRSKARPLLHVMRCWSLVAPHLVEAACHKERHVSQKAVSFIHDILTEVLTDWSEPPHFHFNEALFRPFERIMQLELCDEDVQDQVVTSIGELVEVCSAQIQSGWRPLFSALETVRSGNKSEVKEYLVGDYSMGKGQAPVFDVFEAFLNTDNIQVFANAATSYIMCLMKFVKGLGEVDCKEIGDCVPGAGATSTDLCLPALDYLRRCSQLLAKIYKMPLKPIFLSGRLASLPRRLQEQSASSEDGIESVLSDFDDDTGLIEVWIILLEQLTAAVSNCPRQHQPPTLDLLFELLRDVTKTPGPGFGIYAVVHLLLPVMSLWLLRSHKDHSYWDVASANFKHAIGLSCELVVEHIQSFLHSDIRYESMINTMLKDLFELLVVCVAKPTETISRVGCSCIRYVLVTAGPVFTEEMWRLACCALQDAFSATLKPVKDLLGCFHGGTEGFSGEGCQVRVAAPSSSPSAEAEYWRIRAMAQQVFMLDTQCSPKTPNNFDHAQSCQLIIELPHDEKPNGHAKKSVSFREIVVSLLSHQVLLQNLYDILLEEFVKGPSPGEEKTVQVPDTKLAGFLRYISMQNLAVIFDLLLDSYRTAREFDTSPGLKCLLKKVSGIGGAANLYRQSAMSFNIYFHALVCAVLTNQETITAEQVKKVLFEEEERSSDSSQQCSSEDEDIFEETAQVSPPRGKEKRQWRARLPSLSVQPVSNADWVWLVKRLHKLCMELCNHYIQMHLDLESSLEEPLTFKSDPFFILPSFQSESSTPSTGGFSGKNTPSEDDRREHLSEPQSLRVGSGDMLMLPPSPKTEKKDPGRKKEWWESAGNKICTMAADKTISKLMTEYKKRRQPHNLPPFPKEVKVDKKGEPLGPRGPDSPLLQRPQHLIDQGQMRHSFSAGPELLRQEKRPRSGSTGSSLSVSVRDAEAQIQAWTNMVLTVLNQIQILPDQTFTALQPAVFPCISQLTCHVTDIRVRQAVREWLGRVGRVYDIIT</sequence>